<sequence length="277" mass="30436">MALKTFNPTTPGQRQLVMVDRSALYKGKPVKALTEGKRGKGGRNNTGRITVRFRGGGHKQAYRNVDFKRGKEDVPAIVERLEYDPNRTAFIALIKYQDGEQAYILAPQRLAVGDTVVAGNYVDVKPGNVMPLGNMPVGTIVHNVEMKIGKGGQLARSAGTYAQIVGRDHDYVILRLNSGEQRLVHGRCRGAIGAVSNPDHMNTSIGKAGRTRWMGRRPHNRGVVMNPIDHPHGGGEGRTSGGRHPVTPWGKPTKGKKTRSNKSTNKFILISRHKRKK</sequence>
<dbReference type="EMBL" id="CP000319">
    <property type="protein sequence ID" value="ABE62370.1"/>
    <property type="molecule type" value="Genomic_DNA"/>
</dbReference>
<dbReference type="RefSeq" id="WP_011510057.1">
    <property type="nucleotide sequence ID" value="NC_007964.1"/>
</dbReference>
<dbReference type="SMR" id="Q1QN27"/>
<dbReference type="STRING" id="323097.Nham_1548"/>
<dbReference type="KEGG" id="nha:Nham_1548"/>
<dbReference type="eggNOG" id="COG0090">
    <property type="taxonomic scope" value="Bacteria"/>
</dbReference>
<dbReference type="HOGENOM" id="CLU_036235_2_1_5"/>
<dbReference type="OrthoDB" id="9778722at2"/>
<dbReference type="Proteomes" id="UP000001953">
    <property type="component" value="Chromosome"/>
</dbReference>
<dbReference type="GO" id="GO:0015934">
    <property type="term" value="C:large ribosomal subunit"/>
    <property type="evidence" value="ECO:0007669"/>
    <property type="project" value="InterPro"/>
</dbReference>
<dbReference type="GO" id="GO:0019843">
    <property type="term" value="F:rRNA binding"/>
    <property type="evidence" value="ECO:0007669"/>
    <property type="project" value="UniProtKB-UniRule"/>
</dbReference>
<dbReference type="GO" id="GO:0003735">
    <property type="term" value="F:structural constituent of ribosome"/>
    <property type="evidence" value="ECO:0007669"/>
    <property type="project" value="InterPro"/>
</dbReference>
<dbReference type="GO" id="GO:0016740">
    <property type="term" value="F:transferase activity"/>
    <property type="evidence" value="ECO:0007669"/>
    <property type="project" value="InterPro"/>
</dbReference>
<dbReference type="GO" id="GO:0002181">
    <property type="term" value="P:cytoplasmic translation"/>
    <property type="evidence" value="ECO:0007669"/>
    <property type="project" value="TreeGrafter"/>
</dbReference>
<dbReference type="FunFam" id="2.30.30.30:FF:000055">
    <property type="entry name" value="50S ribosomal protein L2"/>
    <property type="match status" value="1"/>
</dbReference>
<dbReference type="FunFam" id="2.40.50.140:FF:000003">
    <property type="entry name" value="50S ribosomal protein L2"/>
    <property type="match status" value="1"/>
</dbReference>
<dbReference type="FunFam" id="4.10.950.10:FF:000001">
    <property type="entry name" value="50S ribosomal protein L2"/>
    <property type="match status" value="1"/>
</dbReference>
<dbReference type="Gene3D" id="2.30.30.30">
    <property type="match status" value="1"/>
</dbReference>
<dbReference type="Gene3D" id="2.40.50.140">
    <property type="entry name" value="Nucleic acid-binding proteins"/>
    <property type="match status" value="1"/>
</dbReference>
<dbReference type="Gene3D" id="4.10.950.10">
    <property type="entry name" value="Ribosomal protein L2, domain 3"/>
    <property type="match status" value="1"/>
</dbReference>
<dbReference type="HAMAP" id="MF_01320_B">
    <property type="entry name" value="Ribosomal_uL2_B"/>
    <property type="match status" value="1"/>
</dbReference>
<dbReference type="InterPro" id="IPR012340">
    <property type="entry name" value="NA-bd_OB-fold"/>
</dbReference>
<dbReference type="InterPro" id="IPR014722">
    <property type="entry name" value="Rib_uL2_dom2"/>
</dbReference>
<dbReference type="InterPro" id="IPR002171">
    <property type="entry name" value="Ribosomal_uL2"/>
</dbReference>
<dbReference type="InterPro" id="IPR005880">
    <property type="entry name" value="Ribosomal_uL2_bac/org-type"/>
</dbReference>
<dbReference type="InterPro" id="IPR022669">
    <property type="entry name" value="Ribosomal_uL2_C"/>
</dbReference>
<dbReference type="InterPro" id="IPR022671">
    <property type="entry name" value="Ribosomal_uL2_CS"/>
</dbReference>
<dbReference type="InterPro" id="IPR014726">
    <property type="entry name" value="Ribosomal_uL2_dom3"/>
</dbReference>
<dbReference type="InterPro" id="IPR022666">
    <property type="entry name" value="Ribosomal_uL2_RNA-bd_dom"/>
</dbReference>
<dbReference type="InterPro" id="IPR008991">
    <property type="entry name" value="Translation_prot_SH3-like_sf"/>
</dbReference>
<dbReference type="NCBIfam" id="TIGR01171">
    <property type="entry name" value="rplB_bact"/>
    <property type="match status" value="1"/>
</dbReference>
<dbReference type="PANTHER" id="PTHR13691:SF5">
    <property type="entry name" value="LARGE RIBOSOMAL SUBUNIT PROTEIN UL2M"/>
    <property type="match status" value="1"/>
</dbReference>
<dbReference type="PANTHER" id="PTHR13691">
    <property type="entry name" value="RIBOSOMAL PROTEIN L2"/>
    <property type="match status" value="1"/>
</dbReference>
<dbReference type="Pfam" id="PF00181">
    <property type="entry name" value="Ribosomal_L2"/>
    <property type="match status" value="1"/>
</dbReference>
<dbReference type="Pfam" id="PF03947">
    <property type="entry name" value="Ribosomal_L2_C"/>
    <property type="match status" value="1"/>
</dbReference>
<dbReference type="PIRSF" id="PIRSF002158">
    <property type="entry name" value="Ribosomal_L2"/>
    <property type="match status" value="1"/>
</dbReference>
<dbReference type="SMART" id="SM01383">
    <property type="entry name" value="Ribosomal_L2"/>
    <property type="match status" value="1"/>
</dbReference>
<dbReference type="SMART" id="SM01382">
    <property type="entry name" value="Ribosomal_L2_C"/>
    <property type="match status" value="1"/>
</dbReference>
<dbReference type="SUPFAM" id="SSF50249">
    <property type="entry name" value="Nucleic acid-binding proteins"/>
    <property type="match status" value="1"/>
</dbReference>
<dbReference type="SUPFAM" id="SSF50104">
    <property type="entry name" value="Translation proteins SH3-like domain"/>
    <property type="match status" value="1"/>
</dbReference>
<dbReference type="PROSITE" id="PS00467">
    <property type="entry name" value="RIBOSOMAL_L2"/>
    <property type="match status" value="1"/>
</dbReference>
<evidence type="ECO:0000255" key="1">
    <source>
        <dbReference type="HAMAP-Rule" id="MF_01320"/>
    </source>
</evidence>
<evidence type="ECO:0000256" key="2">
    <source>
        <dbReference type="SAM" id="MobiDB-lite"/>
    </source>
</evidence>
<evidence type="ECO:0000305" key="3"/>
<protein>
    <recommendedName>
        <fullName evidence="1">Large ribosomal subunit protein uL2</fullName>
    </recommendedName>
    <alternativeName>
        <fullName evidence="3">50S ribosomal protein L2</fullName>
    </alternativeName>
</protein>
<organism>
    <name type="scientific">Nitrobacter hamburgensis (strain DSM 10229 / NCIMB 13809 / X14)</name>
    <dbReference type="NCBI Taxonomy" id="323097"/>
    <lineage>
        <taxon>Bacteria</taxon>
        <taxon>Pseudomonadati</taxon>
        <taxon>Pseudomonadota</taxon>
        <taxon>Alphaproteobacteria</taxon>
        <taxon>Hyphomicrobiales</taxon>
        <taxon>Nitrobacteraceae</taxon>
        <taxon>Nitrobacter</taxon>
    </lineage>
</organism>
<feature type="chain" id="PRO_0000309969" description="Large ribosomal subunit protein uL2">
    <location>
        <begin position="1"/>
        <end position="277"/>
    </location>
</feature>
<feature type="region of interest" description="Disordered" evidence="2">
    <location>
        <begin position="223"/>
        <end position="277"/>
    </location>
</feature>
<keyword id="KW-1185">Reference proteome</keyword>
<keyword id="KW-0687">Ribonucleoprotein</keyword>
<keyword id="KW-0689">Ribosomal protein</keyword>
<keyword id="KW-0694">RNA-binding</keyword>
<keyword id="KW-0699">rRNA-binding</keyword>
<name>RL2_NITHX</name>
<reference key="1">
    <citation type="submission" date="2006-03" db="EMBL/GenBank/DDBJ databases">
        <title>Complete sequence of chromosome of Nitrobacter hamburgensis X14.</title>
        <authorList>
            <consortium name="US DOE Joint Genome Institute"/>
            <person name="Copeland A."/>
            <person name="Lucas S."/>
            <person name="Lapidus A."/>
            <person name="Barry K."/>
            <person name="Detter J.C."/>
            <person name="Glavina del Rio T."/>
            <person name="Hammon N."/>
            <person name="Israni S."/>
            <person name="Dalin E."/>
            <person name="Tice H."/>
            <person name="Pitluck S."/>
            <person name="Chain P."/>
            <person name="Malfatti S."/>
            <person name="Shin M."/>
            <person name="Vergez L."/>
            <person name="Schmutz J."/>
            <person name="Larimer F."/>
            <person name="Land M."/>
            <person name="Hauser L."/>
            <person name="Kyrpides N."/>
            <person name="Ivanova N."/>
            <person name="Ward B."/>
            <person name="Arp D."/>
            <person name="Klotz M."/>
            <person name="Stein L."/>
            <person name="O'Mullan G."/>
            <person name="Starkenburg S."/>
            <person name="Sayavedra L."/>
            <person name="Poret-Peterson A.T."/>
            <person name="Gentry M.E."/>
            <person name="Bruce D."/>
            <person name="Richardson P."/>
        </authorList>
    </citation>
    <scope>NUCLEOTIDE SEQUENCE [LARGE SCALE GENOMIC DNA]</scope>
    <source>
        <strain>DSM 10229 / NCIMB 13809 / X14</strain>
    </source>
</reference>
<comment type="function">
    <text evidence="1">One of the primary rRNA binding proteins. Required for association of the 30S and 50S subunits to form the 70S ribosome, for tRNA binding and peptide bond formation. It has been suggested to have peptidyltransferase activity; this is somewhat controversial. Makes several contacts with the 16S rRNA in the 70S ribosome.</text>
</comment>
<comment type="subunit">
    <text evidence="1">Part of the 50S ribosomal subunit. Forms a bridge to the 30S subunit in the 70S ribosome.</text>
</comment>
<comment type="similarity">
    <text evidence="1">Belongs to the universal ribosomal protein uL2 family.</text>
</comment>
<accession>Q1QN27</accession>
<proteinExistence type="inferred from homology"/>
<gene>
    <name evidence="1" type="primary">rplB</name>
    <name type="ordered locus">Nham_1548</name>
</gene>